<accession>A7MZB2</accession>
<protein>
    <recommendedName>
        <fullName evidence="1">Phosphoenolpyruvate carboxykinase (ATP)</fullName>
        <shortName evidence="1">PCK</shortName>
        <shortName evidence="1">PEP carboxykinase</shortName>
        <shortName evidence="1">PEPCK</shortName>
        <ecNumber evidence="1">4.1.1.49</ecNumber>
    </recommendedName>
</protein>
<gene>
    <name evidence="1" type="primary">pckA</name>
    <name type="ordered locus">VIBHAR_00597</name>
</gene>
<comment type="function">
    <text evidence="1">Involved in the gluconeogenesis. Catalyzes the conversion of oxaloacetate (OAA) to phosphoenolpyruvate (PEP) through direct phosphoryl transfer between the nucleoside triphosphate and OAA.</text>
</comment>
<comment type="catalytic activity">
    <reaction evidence="1">
        <text>oxaloacetate + ATP = phosphoenolpyruvate + ADP + CO2</text>
        <dbReference type="Rhea" id="RHEA:18617"/>
        <dbReference type="ChEBI" id="CHEBI:16452"/>
        <dbReference type="ChEBI" id="CHEBI:16526"/>
        <dbReference type="ChEBI" id="CHEBI:30616"/>
        <dbReference type="ChEBI" id="CHEBI:58702"/>
        <dbReference type="ChEBI" id="CHEBI:456216"/>
        <dbReference type="EC" id="4.1.1.49"/>
    </reaction>
</comment>
<comment type="cofactor">
    <cofactor evidence="1">
        <name>Mn(2+)</name>
        <dbReference type="ChEBI" id="CHEBI:29035"/>
    </cofactor>
    <text evidence="1">Binds 1 Mn(2+) ion per subunit.</text>
</comment>
<comment type="pathway">
    <text evidence="1">Carbohydrate biosynthesis; gluconeogenesis.</text>
</comment>
<comment type="subunit">
    <text evidence="1">Monomer.</text>
</comment>
<comment type="subcellular location">
    <subcellularLocation>
        <location evidence="1">Cytoplasm</location>
    </subcellularLocation>
</comment>
<comment type="similarity">
    <text evidence="1">Belongs to the phosphoenolpyruvate carboxykinase (ATP) family.</text>
</comment>
<reference key="1">
    <citation type="submission" date="2007-08" db="EMBL/GenBank/DDBJ databases">
        <authorList>
            <consortium name="The Vibrio harveyi Genome Sequencing Project"/>
            <person name="Bassler B."/>
            <person name="Clifton S.W."/>
            <person name="Fulton L."/>
            <person name="Delehaunty K."/>
            <person name="Fronick C."/>
            <person name="Harrison M."/>
            <person name="Markivic C."/>
            <person name="Fulton R."/>
            <person name="Tin-Wollam A.-M."/>
            <person name="Shah N."/>
            <person name="Pepin K."/>
            <person name="Nash W."/>
            <person name="Thiruvilangam P."/>
            <person name="Bhonagiri V."/>
            <person name="Waters C."/>
            <person name="Tu K.C."/>
            <person name="Irgon J."/>
            <person name="Wilson R.K."/>
        </authorList>
    </citation>
    <scope>NUCLEOTIDE SEQUENCE [LARGE SCALE GENOMIC DNA]</scope>
    <source>
        <strain>ATCC BAA-1116 / BB120</strain>
    </source>
</reference>
<organism>
    <name type="scientific">Vibrio campbellii (strain ATCC BAA-1116)</name>
    <dbReference type="NCBI Taxonomy" id="2902295"/>
    <lineage>
        <taxon>Bacteria</taxon>
        <taxon>Pseudomonadati</taxon>
        <taxon>Pseudomonadota</taxon>
        <taxon>Gammaproteobacteria</taxon>
        <taxon>Vibrionales</taxon>
        <taxon>Vibrionaceae</taxon>
        <taxon>Vibrio</taxon>
    </lineage>
</organism>
<keyword id="KW-0067">ATP-binding</keyword>
<keyword id="KW-0963">Cytoplasm</keyword>
<keyword id="KW-0210">Decarboxylase</keyword>
<keyword id="KW-0312">Gluconeogenesis</keyword>
<keyword id="KW-0456">Lyase</keyword>
<keyword id="KW-0464">Manganese</keyword>
<keyword id="KW-0479">Metal-binding</keyword>
<keyword id="KW-0547">Nucleotide-binding</keyword>
<feature type="chain" id="PRO_1000026363" description="Phosphoenolpyruvate carboxykinase (ATP)">
    <location>
        <begin position="1"/>
        <end position="542"/>
    </location>
</feature>
<feature type="binding site" evidence="1">
    <location>
        <position position="67"/>
    </location>
    <ligand>
        <name>substrate</name>
    </ligand>
</feature>
<feature type="binding site" evidence="1">
    <location>
        <position position="208"/>
    </location>
    <ligand>
        <name>substrate</name>
    </ligand>
</feature>
<feature type="binding site" evidence="1">
    <location>
        <position position="214"/>
    </location>
    <ligand>
        <name>ATP</name>
        <dbReference type="ChEBI" id="CHEBI:30616"/>
    </ligand>
</feature>
<feature type="binding site" evidence="1">
    <location>
        <position position="214"/>
    </location>
    <ligand>
        <name>Mn(2+)</name>
        <dbReference type="ChEBI" id="CHEBI:29035"/>
    </ligand>
</feature>
<feature type="binding site" evidence="1">
    <location>
        <position position="214"/>
    </location>
    <ligand>
        <name>substrate</name>
    </ligand>
</feature>
<feature type="binding site" evidence="1">
    <location>
        <position position="233"/>
    </location>
    <ligand>
        <name>ATP</name>
        <dbReference type="ChEBI" id="CHEBI:30616"/>
    </ligand>
</feature>
<feature type="binding site" evidence="1">
    <location>
        <position position="233"/>
    </location>
    <ligand>
        <name>Mn(2+)</name>
        <dbReference type="ChEBI" id="CHEBI:29035"/>
    </ligand>
</feature>
<feature type="binding site" evidence="1">
    <location>
        <begin position="249"/>
        <end position="257"/>
    </location>
    <ligand>
        <name>ATP</name>
        <dbReference type="ChEBI" id="CHEBI:30616"/>
    </ligand>
</feature>
<feature type="binding site" evidence="1">
    <location>
        <position position="270"/>
    </location>
    <ligand>
        <name>Mn(2+)</name>
        <dbReference type="ChEBI" id="CHEBI:29035"/>
    </ligand>
</feature>
<feature type="binding site" evidence="1">
    <location>
        <position position="298"/>
    </location>
    <ligand>
        <name>ATP</name>
        <dbReference type="ChEBI" id="CHEBI:30616"/>
    </ligand>
</feature>
<feature type="binding site" evidence="1">
    <location>
        <position position="334"/>
    </location>
    <ligand>
        <name>ATP</name>
        <dbReference type="ChEBI" id="CHEBI:30616"/>
    </ligand>
</feature>
<feature type="binding site" evidence="1">
    <location>
        <position position="334"/>
    </location>
    <ligand>
        <name>substrate</name>
    </ligand>
</feature>
<feature type="binding site" evidence="1">
    <location>
        <begin position="450"/>
        <end position="451"/>
    </location>
    <ligand>
        <name>ATP</name>
        <dbReference type="ChEBI" id="CHEBI:30616"/>
    </ligand>
</feature>
<feature type="binding site" evidence="1">
    <location>
        <position position="456"/>
    </location>
    <ligand>
        <name>ATP</name>
        <dbReference type="ChEBI" id="CHEBI:30616"/>
    </ligand>
</feature>
<proteinExistence type="inferred from homology"/>
<sequence length="542" mass="60094">MTVMEHTKAATIDLTKHGLHNVKEVVRNPSYEMLFEEETRADLTGYERGVVTELGAVAVDTGIFTGRSPKDKYIVKDATTEEHMWWTSDAVKNDNKPINKEVWDDLKELVTNQLSGKRLFVIDGYCGANPDTRLSIRVITEVAWQAHFVKNMFIRPTEEELATFEPDFVVMNGAKCTNDKWEEQGLNSENFTVFNLTERTQLIGGTWYGGEMKKGMFAMMNYFLPLKDIASMHCSANMGEEGDVAIFFGLSGTGKTTLSTDPKRALIGDDEHGWDDDGVFNFEGGCYAKTIKLSKEAEPDIYNAIRRDALLENVTVRSDGSIDFDDGSKTENTRVSYPLYHIDNIVKPVSKGGHANKVIFLSADAFGVLPPVSKLTPEQTKYHFLSGFTAKLAGTERGITEPTPTFSACFGAAFLTLHPTKYAEVLVKRMEAAGAEAYLVNTGWNGSGKRISIQDTRGIIDAILDGSIEDAKTKHIPIFNLEVPTSLPGVDPSILDPRDTYVDPLQWESKAKDLAERFINNFDKYTDNAEGKSLVAAGPQLD</sequence>
<evidence type="ECO:0000255" key="1">
    <source>
        <dbReference type="HAMAP-Rule" id="MF_00453"/>
    </source>
</evidence>
<name>PCKA_VIBC1</name>
<dbReference type="EC" id="4.1.1.49" evidence="1"/>
<dbReference type="EMBL" id="CP000789">
    <property type="protein sequence ID" value="ABU69599.1"/>
    <property type="molecule type" value="Genomic_DNA"/>
</dbReference>
<dbReference type="RefSeq" id="WP_012126770.1">
    <property type="nucleotide sequence ID" value="NC_009783.1"/>
</dbReference>
<dbReference type="SMR" id="A7MZB2"/>
<dbReference type="KEGG" id="vha:VIBHAR_00597"/>
<dbReference type="PATRIC" id="fig|338187.25.peg.2018"/>
<dbReference type="UniPathway" id="UPA00138"/>
<dbReference type="Proteomes" id="UP000008152">
    <property type="component" value="Chromosome I"/>
</dbReference>
<dbReference type="GO" id="GO:0005829">
    <property type="term" value="C:cytosol"/>
    <property type="evidence" value="ECO:0007669"/>
    <property type="project" value="TreeGrafter"/>
</dbReference>
<dbReference type="GO" id="GO:0005524">
    <property type="term" value="F:ATP binding"/>
    <property type="evidence" value="ECO:0007669"/>
    <property type="project" value="UniProtKB-UniRule"/>
</dbReference>
<dbReference type="GO" id="GO:0046872">
    <property type="term" value="F:metal ion binding"/>
    <property type="evidence" value="ECO:0007669"/>
    <property type="project" value="UniProtKB-KW"/>
</dbReference>
<dbReference type="GO" id="GO:0004612">
    <property type="term" value="F:phosphoenolpyruvate carboxykinase (ATP) activity"/>
    <property type="evidence" value="ECO:0007669"/>
    <property type="project" value="UniProtKB-UniRule"/>
</dbReference>
<dbReference type="GO" id="GO:0006094">
    <property type="term" value="P:gluconeogenesis"/>
    <property type="evidence" value="ECO:0007669"/>
    <property type="project" value="UniProtKB-UniRule"/>
</dbReference>
<dbReference type="CDD" id="cd00484">
    <property type="entry name" value="PEPCK_ATP"/>
    <property type="match status" value="1"/>
</dbReference>
<dbReference type="FunFam" id="2.170.8.10:FF:000001">
    <property type="entry name" value="Phosphoenolpyruvate carboxykinase (ATP)"/>
    <property type="match status" value="1"/>
</dbReference>
<dbReference type="FunFam" id="3.40.449.10:FF:000001">
    <property type="entry name" value="Phosphoenolpyruvate carboxykinase (ATP)"/>
    <property type="match status" value="1"/>
</dbReference>
<dbReference type="Gene3D" id="3.90.228.20">
    <property type="match status" value="1"/>
</dbReference>
<dbReference type="Gene3D" id="3.40.449.10">
    <property type="entry name" value="Phosphoenolpyruvate Carboxykinase, domain 1"/>
    <property type="match status" value="1"/>
</dbReference>
<dbReference type="Gene3D" id="2.170.8.10">
    <property type="entry name" value="Phosphoenolpyruvate Carboxykinase, domain 2"/>
    <property type="match status" value="1"/>
</dbReference>
<dbReference type="HAMAP" id="MF_00453">
    <property type="entry name" value="PEPCK_ATP"/>
    <property type="match status" value="1"/>
</dbReference>
<dbReference type="InterPro" id="IPR001272">
    <property type="entry name" value="PEP_carboxykinase_ATP"/>
</dbReference>
<dbReference type="InterPro" id="IPR013035">
    <property type="entry name" value="PEP_carboxykinase_C"/>
</dbReference>
<dbReference type="InterPro" id="IPR008210">
    <property type="entry name" value="PEP_carboxykinase_N"/>
</dbReference>
<dbReference type="InterPro" id="IPR015994">
    <property type="entry name" value="PEPCK_ATP_CS"/>
</dbReference>
<dbReference type="NCBIfam" id="TIGR00224">
    <property type="entry name" value="pckA"/>
    <property type="match status" value="1"/>
</dbReference>
<dbReference type="NCBIfam" id="NF006819">
    <property type="entry name" value="PRK09344.1-1"/>
    <property type="match status" value="1"/>
</dbReference>
<dbReference type="NCBIfam" id="NF006820">
    <property type="entry name" value="PRK09344.1-2"/>
    <property type="match status" value="1"/>
</dbReference>
<dbReference type="NCBIfam" id="NF006821">
    <property type="entry name" value="PRK09344.1-3"/>
    <property type="match status" value="1"/>
</dbReference>
<dbReference type="PANTHER" id="PTHR30031:SF0">
    <property type="entry name" value="PHOSPHOENOLPYRUVATE CARBOXYKINASE (ATP)"/>
    <property type="match status" value="1"/>
</dbReference>
<dbReference type="PANTHER" id="PTHR30031">
    <property type="entry name" value="PHOSPHOENOLPYRUVATE CARBOXYKINASE ATP"/>
    <property type="match status" value="1"/>
</dbReference>
<dbReference type="Pfam" id="PF01293">
    <property type="entry name" value="PEPCK_ATP"/>
    <property type="match status" value="1"/>
</dbReference>
<dbReference type="PIRSF" id="PIRSF006294">
    <property type="entry name" value="PEP_crbxkin"/>
    <property type="match status" value="1"/>
</dbReference>
<dbReference type="SUPFAM" id="SSF68923">
    <property type="entry name" value="PEP carboxykinase N-terminal domain"/>
    <property type="match status" value="1"/>
</dbReference>
<dbReference type="SUPFAM" id="SSF53795">
    <property type="entry name" value="PEP carboxykinase-like"/>
    <property type="match status" value="1"/>
</dbReference>
<dbReference type="PROSITE" id="PS00532">
    <property type="entry name" value="PEPCK_ATP"/>
    <property type="match status" value="1"/>
</dbReference>